<proteinExistence type="inferred from homology"/>
<sequence length="318" mass="36169">MFKSWSKRLKYAPTPLVGDEVLRAQGLKCVFDEKTPEEFWALNGIDFTFEKNKIYCIIGNSGSGKSTLVTHFNGLLTSKYGTLSIRDFKNNHDIVISPNTKKIKNFKRLRKIISMVFQFPEYQLFKDTIQKDIMFGPVALGVHKEEAAKLAKFYLNRMGLDSSYLDVSPFELSGGQKRRVAIAGILAIQSEIIIFDEPTAGLDPKGESEMVELILESKKENKTVIVITHQMEKVLEIADEVILLDKGKILTSGTPYQIFTNPEIMQTTSIALPHVVQVINDLSLRNPIFKKLYDYEPRTVKDLAKVINEVIKNYEKRN</sequence>
<reference key="1">
    <citation type="journal article" date="2003" name="Microbiology">
        <title>The complete genome sequence of the avian pathogen Mycoplasma gallisepticum strain R(low).</title>
        <authorList>
            <person name="Papazisi L."/>
            <person name="Gorton T.S."/>
            <person name="Kutish G."/>
            <person name="Markham P.F."/>
            <person name="Browning G.F."/>
            <person name="Nguyen D.K."/>
            <person name="Swartzell S."/>
            <person name="Madan A."/>
            <person name="Mahairas G."/>
            <person name="Geary S.J."/>
        </authorList>
    </citation>
    <scope>NUCLEOTIDE SEQUENCE [LARGE SCALE GENOMIC DNA]</scope>
    <source>
        <strain>R(low / passage 15 / clone 2)</strain>
    </source>
</reference>
<name>ECFA2_MYCGA</name>
<evidence type="ECO:0000255" key="1">
    <source>
        <dbReference type="HAMAP-Rule" id="MF_01710"/>
    </source>
</evidence>
<feature type="chain" id="PRO_0000092038" description="Energy-coupling factor transporter ATP-binding protein EcfA2">
    <location>
        <begin position="1"/>
        <end position="318"/>
    </location>
</feature>
<feature type="domain" description="ABC transporter" evidence="1">
    <location>
        <begin position="22"/>
        <end position="271"/>
    </location>
</feature>
<feature type="binding site" evidence="1">
    <location>
        <begin position="59"/>
        <end position="66"/>
    </location>
    <ligand>
        <name>ATP</name>
        <dbReference type="ChEBI" id="CHEBI:30616"/>
    </ligand>
</feature>
<gene>
    <name evidence="1" type="primary">ecfA2</name>
    <name type="synonym">cbiO2</name>
    <name type="ordered locus">MYCGA5780</name>
    <name type="ORF">MGA_0353</name>
</gene>
<accession>Q7NAQ7</accession>
<protein>
    <recommendedName>
        <fullName evidence="1">Energy-coupling factor transporter ATP-binding protein EcfA2</fullName>
        <shortName evidence="1">ECF transporter A component EcfA2</shortName>
        <ecNumber evidence="1">7.-.-.-</ecNumber>
    </recommendedName>
</protein>
<keyword id="KW-0067">ATP-binding</keyword>
<keyword id="KW-1003">Cell membrane</keyword>
<keyword id="KW-0472">Membrane</keyword>
<keyword id="KW-0547">Nucleotide-binding</keyword>
<keyword id="KW-1185">Reference proteome</keyword>
<keyword id="KW-1278">Translocase</keyword>
<keyword id="KW-0813">Transport</keyword>
<comment type="function">
    <text evidence="1">ATP-binding (A) component of a common energy-coupling factor (ECF) ABC-transporter complex. Unlike classic ABC transporters this ECF transporter provides the energy necessary to transport a number of different substrates.</text>
</comment>
<comment type="subunit">
    <text evidence="1">Forms a stable energy-coupling factor (ECF) transporter complex composed of 2 membrane-embedded substrate-binding proteins (S component), 2 ATP-binding proteins (A component) and 2 transmembrane proteins (T component).</text>
</comment>
<comment type="subcellular location">
    <subcellularLocation>
        <location evidence="1">Cell membrane</location>
        <topology evidence="1">Peripheral membrane protein</topology>
    </subcellularLocation>
</comment>
<comment type="similarity">
    <text evidence="1">Belongs to the ABC transporter superfamily. Energy-coupling factor EcfA family.</text>
</comment>
<organism>
    <name type="scientific">Mycoplasmoides gallisepticum (strain R(low / passage 15 / clone 2))</name>
    <name type="common">Mycoplasma gallisepticum</name>
    <dbReference type="NCBI Taxonomy" id="710127"/>
    <lineage>
        <taxon>Bacteria</taxon>
        <taxon>Bacillati</taxon>
        <taxon>Mycoplasmatota</taxon>
        <taxon>Mycoplasmoidales</taxon>
        <taxon>Mycoplasmoidaceae</taxon>
        <taxon>Mycoplasmoides</taxon>
    </lineage>
</organism>
<dbReference type="EC" id="7.-.-.-" evidence="1"/>
<dbReference type="EMBL" id="AE015450">
    <property type="protein sequence ID" value="AAP56928.1"/>
    <property type="molecule type" value="Genomic_DNA"/>
</dbReference>
<dbReference type="RefSeq" id="WP_011113835.1">
    <property type="nucleotide sequence ID" value="NC_004829.2"/>
</dbReference>
<dbReference type="SMR" id="Q7NAQ7"/>
<dbReference type="KEGG" id="mga:MGA_0353"/>
<dbReference type="HOGENOM" id="CLU_000604_1_22_14"/>
<dbReference type="OrthoDB" id="9784332at2"/>
<dbReference type="Proteomes" id="UP000001418">
    <property type="component" value="Chromosome"/>
</dbReference>
<dbReference type="GO" id="GO:0043190">
    <property type="term" value="C:ATP-binding cassette (ABC) transporter complex"/>
    <property type="evidence" value="ECO:0007669"/>
    <property type="project" value="TreeGrafter"/>
</dbReference>
<dbReference type="GO" id="GO:0005524">
    <property type="term" value="F:ATP binding"/>
    <property type="evidence" value="ECO:0007669"/>
    <property type="project" value="UniProtKB-KW"/>
</dbReference>
<dbReference type="GO" id="GO:0016887">
    <property type="term" value="F:ATP hydrolysis activity"/>
    <property type="evidence" value="ECO:0007669"/>
    <property type="project" value="InterPro"/>
</dbReference>
<dbReference type="GO" id="GO:0042626">
    <property type="term" value="F:ATPase-coupled transmembrane transporter activity"/>
    <property type="evidence" value="ECO:0007669"/>
    <property type="project" value="TreeGrafter"/>
</dbReference>
<dbReference type="CDD" id="cd03225">
    <property type="entry name" value="ABC_cobalt_CbiO_domain1"/>
    <property type="match status" value="1"/>
</dbReference>
<dbReference type="FunFam" id="3.40.50.300:FF:000224">
    <property type="entry name" value="Energy-coupling factor transporter ATP-binding protein EcfA"/>
    <property type="match status" value="1"/>
</dbReference>
<dbReference type="Gene3D" id="3.40.50.300">
    <property type="entry name" value="P-loop containing nucleotide triphosphate hydrolases"/>
    <property type="match status" value="1"/>
</dbReference>
<dbReference type="InterPro" id="IPR003593">
    <property type="entry name" value="AAA+_ATPase"/>
</dbReference>
<dbReference type="InterPro" id="IPR003439">
    <property type="entry name" value="ABC_transporter-like_ATP-bd"/>
</dbReference>
<dbReference type="InterPro" id="IPR017871">
    <property type="entry name" value="ABC_transporter-like_CS"/>
</dbReference>
<dbReference type="InterPro" id="IPR015856">
    <property type="entry name" value="ABC_transpr_CbiO/EcfA_su"/>
</dbReference>
<dbReference type="InterPro" id="IPR050095">
    <property type="entry name" value="ECF_ABC_transporter_ATP-bd"/>
</dbReference>
<dbReference type="InterPro" id="IPR027417">
    <property type="entry name" value="P-loop_NTPase"/>
</dbReference>
<dbReference type="NCBIfam" id="NF010153">
    <property type="entry name" value="PRK13631.1"/>
    <property type="match status" value="1"/>
</dbReference>
<dbReference type="PANTHER" id="PTHR43553:SF27">
    <property type="entry name" value="ENERGY-COUPLING FACTOR TRANSPORTER ATP-BINDING PROTEIN ECFA2"/>
    <property type="match status" value="1"/>
</dbReference>
<dbReference type="PANTHER" id="PTHR43553">
    <property type="entry name" value="HEAVY METAL TRANSPORTER"/>
    <property type="match status" value="1"/>
</dbReference>
<dbReference type="Pfam" id="PF00005">
    <property type="entry name" value="ABC_tran"/>
    <property type="match status" value="1"/>
</dbReference>
<dbReference type="SMART" id="SM00382">
    <property type="entry name" value="AAA"/>
    <property type="match status" value="1"/>
</dbReference>
<dbReference type="SUPFAM" id="SSF52540">
    <property type="entry name" value="P-loop containing nucleoside triphosphate hydrolases"/>
    <property type="match status" value="1"/>
</dbReference>
<dbReference type="PROSITE" id="PS00211">
    <property type="entry name" value="ABC_TRANSPORTER_1"/>
    <property type="match status" value="1"/>
</dbReference>
<dbReference type="PROSITE" id="PS50893">
    <property type="entry name" value="ABC_TRANSPORTER_2"/>
    <property type="match status" value="1"/>
</dbReference>
<dbReference type="PROSITE" id="PS51246">
    <property type="entry name" value="CBIO"/>
    <property type="match status" value="1"/>
</dbReference>